<comment type="function">
    <text evidence="1">Involved in urease metallocenter assembly. Binds nickel. Probably functions as a nickel donor during metallocenter assembly.</text>
</comment>
<comment type="subcellular location">
    <subcellularLocation>
        <location evidence="1">Cytoplasm</location>
    </subcellularLocation>
</comment>
<comment type="similarity">
    <text evidence="1">Belongs to the UreE family.</text>
</comment>
<feature type="chain" id="PRO_1000197438" description="Urease accessory protein UreE">
    <location>
        <begin position="1"/>
        <end position="170"/>
    </location>
</feature>
<reference key="1">
    <citation type="submission" date="2008-10" db="EMBL/GenBank/DDBJ databases">
        <title>The complete genome sequence of Helicobacter pylori strain P12.</title>
        <authorList>
            <person name="Fischer W."/>
            <person name="Windhager L."/>
            <person name="Karnholz A."/>
            <person name="Zeiller M."/>
            <person name="Zimmer R."/>
            <person name="Haas R."/>
        </authorList>
    </citation>
    <scope>NUCLEOTIDE SEQUENCE [LARGE SCALE GENOMIC DNA]</scope>
    <source>
        <strain>P12</strain>
    </source>
</reference>
<sequence>MIIERLVGNLRDLNPLDFNVDYVDLEWFETRKKIARFKTRQGKDIAIRLKDAPKLGLSQGDILFKEEKEIIAVNILDSEVIHIQAKSVAEVAKICYEIGNRHAALYYGESQFEFKTPFEKPTLALLEKLGVQNRVLSSKLDSKERLTVSMPHSEPNFKVSLASDFKVVMK</sequence>
<evidence type="ECO:0000255" key="1">
    <source>
        <dbReference type="HAMAP-Rule" id="MF_00822"/>
    </source>
</evidence>
<dbReference type="EMBL" id="CP001217">
    <property type="protein sequence ID" value="ACJ07234.1"/>
    <property type="molecule type" value="Genomic_DNA"/>
</dbReference>
<dbReference type="SMR" id="B6JPH3"/>
<dbReference type="KEGG" id="hpp:HPP12_0074"/>
<dbReference type="HOGENOM" id="CLU_093757_3_0_7"/>
<dbReference type="Proteomes" id="UP000008198">
    <property type="component" value="Chromosome"/>
</dbReference>
<dbReference type="GO" id="GO:0005737">
    <property type="term" value="C:cytoplasm"/>
    <property type="evidence" value="ECO:0007669"/>
    <property type="project" value="UniProtKB-SubCell"/>
</dbReference>
<dbReference type="GO" id="GO:0016151">
    <property type="term" value="F:nickel cation binding"/>
    <property type="evidence" value="ECO:0007669"/>
    <property type="project" value="UniProtKB-UniRule"/>
</dbReference>
<dbReference type="GO" id="GO:0051082">
    <property type="term" value="F:unfolded protein binding"/>
    <property type="evidence" value="ECO:0007669"/>
    <property type="project" value="UniProtKB-UniRule"/>
</dbReference>
<dbReference type="GO" id="GO:0006457">
    <property type="term" value="P:protein folding"/>
    <property type="evidence" value="ECO:0007669"/>
    <property type="project" value="InterPro"/>
</dbReference>
<dbReference type="GO" id="GO:0065003">
    <property type="term" value="P:protein-containing complex assembly"/>
    <property type="evidence" value="ECO:0007669"/>
    <property type="project" value="InterPro"/>
</dbReference>
<dbReference type="GO" id="GO:0019627">
    <property type="term" value="P:urea metabolic process"/>
    <property type="evidence" value="ECO:0007669"/>
    <property type="project" value="InterPro"/>
</dbReference>
<dbReference type="CDD" id="cd00571">
    <property type="entry name" value="UreE"/>
    <property type="match status" value="1"/>
</dbReference>
<dbReference type="Gene3D" id="2.60.260.20">
    <property type="entry name" value="Urease metallochaperone UreE, N-terminal domain"/>
    <property type="match status" value="1"/>
</dbReference>
<dbReference type="Gene3D" id="3.30.70.790">
    <property type="entry name" value="UreE, C-terminal domain"/>
    <property type="match status" value="1"/>
</dbReference>
<dbReference type="HAMAP" id="MF_00822">
    <property type="entry name" value="UreE"/>
    <property type="match status" value="1"/>
</dbReference>
<dbReference type="InterPro" id="IPR012406">
    <property type="entry name" value="UreE"/>
</dbReference>
<dbReference type="InterPro" id="IPR007864">
    <property type="entry name" value="UreE_C_dom"/>
</dbReference>
<dbReference type="InterPro" id="IPR004029">
    <property type="entry name" value="UreE_N"/>
</dbReference>
<dbReference type="InterPro" id="IPR036118">
    <property type="entry name" value="UreE_N_sf"/>
</dbReference>
<dbReference type="NCBIfam" id="NF009754">
    <property type="entry name" value="PRK13261.1-6"/>
    <property type="match status" value="1"/>
</dbReference>
<dbReference type="Pfam" id="PF05194">
    <property type="entry name" value="UreE_C"/>
    <property type="match status" value="1"/>
</dbReference>
<dbReference type="Pfam" id="PF02814">
    <property type="entry name" value="UreE_N"/>
    <property type="match status" value="1"/>
</dbReference>
<dbReference type="PIRSF" id="PIRSF036402">
    <property type="entry name" value="Ureas_acces_UreE"/>
    <property type="match status" value="1"/>
</dbReference>
<dbReference type="SMART" id="SM00988">
    <property type="entry name" value="UreE_N"/>
    <property type="match status" value="1"/>
</dbReference>
<dbReference type="SUPFAM" id="SSF69737">
    <property type="entry name" value="Urease metallochaperone UreE, C-terminal domain"/>
    <property type="match status" value="1"/>
</dbReference>
<dbReference type="SUPFAM" id="SSF69287">
    <property type="entry name" value="Urease metallochaperone UreE, N-terminal domain"/>
    <property type="match status" value="1"/>
</dbReference>
<organism>
    <name type="scientific">Helicobacter pylori (strain P12)</name>
    <dbReference type="NCBI Taxonomy" id="570508"/>
    <lineage>
        <taxon>Bacteria</taxon>
        <taxon>Pseudomonadati</taxon>
        <taxon>Campylobacterota</taxon>
        <taxon>Epsilonproteobacteria</taxon>
        <taxon>Campylobacterales</taxon>
        <taxon>Helicobacteraceae</taxon>
        <taxon>Helicobacter</taxon>
    </lineage>
</organism>
<keyword id="KW-0143">Chaperone</keyword>
<keyword id="KW-0963">Cytoplasm</keyword>
<keyword id="KW-0533">Nickel</keyword>
<protein>
    <recommendedName>
        <fullName evidence="1">Urease accessory protein UreE</fullName>
    </recommendedName>
</protein>
<accession>B6JPH3</accession>
<proteinExistence type="inferred from homology"/>
<gene>
    <name evidence="1" type="primary">ureE</name>
    <name type="ordered locus">HPP12_0074</name>
</gene>
<name>UREE_HELP2</name>